<protein>
    <recommendedName>
        <fullName>F-box/LRR-repeat protein 15</fullName>
    </recommendedName>
</protein>
<proteinExistence type="inferred from homology"/>
<feature type="chain" id="PRO_0000410905" description="F-box/LRR-repeat protein 15">
    <location>
        <begin position="1"/>
        <end position="300"/>
    </location>
</feature>
<feature type="domain" description="F-box">
    <location>
        <begin position="19"/>
        <end position="66"/>
    </location>
</feature>
<feature type="repeat" description="LRR 1">
    <location>
        <begin position="141"/>
        <end position="162"/>
    </location>
</feature>
<feature type="repeat" description="LRR 2">
    <location>
        <begin position="167"/>
        <end position="188"/>
    </location>
</feature>
<feature type="repeat" description="LRR 3">
    <location>
        <begin position="194"/>
        <end position="215"/>
    </location>
</feature>
<feature type="repeat" description="LRR 4">
    <location>
        <begin position="220"/>
        <end position="241"/>
    </location>
</feature>
<feature type="repeat" description="LRR 5">
    <location>
        <begin position="246"/>
        <end position="267"/>
    </location>
</feature>
<feature type="region of interest" description="Interaction with SMURF1" evidence="1">
    <location>
        <begin position="113"/>
        <end position="269"/>
    </location>
</feature>
<feature type="modified residue" description="N-acetylmethionine" evidence="2">
    <location>
        <position position="1"/>
    </location>
</feature>
<keyword id="KW-0007">Acetylation</keyword>
<keyword id="KW-0963">Cytoplasm</keyword>
<keyword id="KW-0433">Leucine-rich repeat</keyword>
<keyword id="KW-1185">Reference proteome</keyword>
<keyword id="KW-0677">Repeat</keyword>
<keyword id="KW-0833">Ubl conjugation pathway</keyword>
<comment type="function">
    <text evidence="1 3">Substrate recognition component of a SCF (SKP1-CUL1-F-box protein) E3 ubiquitin-protein ligase complex which mediates the ubiquitination and subsequent proteasomal degradation of SMURF1, thereby acting as a positive regulator of the BMP signaling pathway. Required for dorsal/ventral pattern formation. Also mediates ubiquitination of SMURF2 and WWP2 (By similarity). Required for bone mass maintenance.</text>
</comment>
<comment type="pathway">
    <text>Protein modification; protein ubiquitination.</text>
</comment>
<comment type="subunit">
    <text evidence="1">Part of the SCF (SKP1-CUL1-F-box) E3 ubiquitin-protein ligase complex SCF(FBXL15) composed of CUL1, SKP1, RBX1 and FBXL15.</text>
</comment>
<comment type="subcellular location">
    <subcellularLocation>
        <location evidence="1">Cytoplasm</location>
    </subcellularLocation>
</comment>
<comment type="similarity">
    <text evidence="4">Belongs to the FBXL15 family.</text>
</comment>
<accession>D4ABB4</accession>
<sequence>MEPPMEQSGGEQEPGAVRLLDLPWEDVLLPHVLNWVPLRQLLRLQRVSRAFRALVQLHLARLRRFDAAQVGPQIPRAALVRLLRDAEGLQELALAPCHEWLLDEDLVPVLARNPQLRSVALAGCGQLSRRALGALAEGCPRLQRISLAHCDWVDGLALRGLADRCPALEELDLTACRQLKDEAIVYLAQRRGAGLRSLSLAVNANVGDTAVQELARNCPQLEHLDLTGCLRVGSDGVRTLAEYCPALRSLRVRHCHHVAEPSLSRLRKRGVDIDVEPPLHQALVLLQDMAGFAPFVNLQV</sequence>
<name>FXL15_RAT</name>
<reference key="1">
    <citation type="journal article" date="2004" name="Nature">
        <title>Genome sequence of the Brown Norway rat yields insights into mammalian evolution.</title>
        <authorList>
            <person name="Gibbs R.A."/>
            <person name="Weinstock G.M."/>
            <person name="Metzker M.L."/>
            <person name="Muzny D.M."/>
            <person name="Sodergren E.J."/>
            <person name="Scherer S."/>
            <person name="Scott G."/>
            <person name="Steffen D."/>
            <person name="Worley K.C."/>
            <person name="Burch P.E."/>
            <person name="Okwuonu G."/>
            <person name="Hines S."/>
            <person name="Lewis L."/>
            <person name="Deramo C."/>
            <person name="Delgado O."/>
            <person name="Dugan-Rocha S."/>
            <person name="Miner G."/>
            <person name="Morgan M."/>
            <person name="Hawes A."/>
            <person name="Gill R."/>
            <person name="Holt R.A."/>
            <person name="Adams M.D."/>
            <person name="Amanatides P.G."/>
            <person name="Baden-Tillson H."/>
            <person name="Barnstead M."/>
            <person name="Chin S."/>
            <person name="Evans C.A."/>
            <person name="Ferriera S."/>
            <person name="Fosler C."/>
            <person name="Glodek A."/>
            <person name="Gu Z."/>
            <person name="Jennings D."/>
            <person name="Kraft C.L."/>
            <person name="Nguyen T."/>
            <person name="Pfannkoch C.M."/>
            <person name="Sitter C."/>
            <person name="Sutton G.G."/>
            <person name="Venter J.C."/>
            <person name="Woodage T."/>
            <person name="Smith D."/>
            <person name="Lee H.-M."/>
            <person name="Gustafson E."/>
            <person name="Cahill P."/>
            <person name="Kana A."/>
            <person name="Doucette-Stamm L."/>
            <person name="Weinstock K."/>
            <person name="Fechtel K."/>
            <person name="Weiss R.B."/>
            <person name="Dunn D.M."/>
            <person name="Green E.D."/>
            <person name="Blakesley R.W."/>
            <person name="Bouffard G.G."/>
            <person name="De Jong P.J."/>
            <person name="Osoegawa K."/>
            <person name="Zhu B."/>
            <person name="Marra M."/>
            <person name="Schein J."/>
            <person name="Bosdet I."/>
            <person name="Fjell C."/>
            <person name="Jones S."/>
            <person name="Krzywinski M."/>
            <person name="Mathewson C."/>
            <person name="Siddiqui A."/>
            <person name="Wye N."/>
            <person name="McPherson J."/>
            <person name="Zhao S."/>
            <person name="Fraser C.M."/>
            <person name="Shetty J."/>
            <person name="Shatsman S."/>
            <person name="Geer K."/>
            <person name="Chen Y."/>
            <person name="Abramzon S."/>
            <person name="Nierman W.C."/>
            <person name="Havlak P.H."/>
            <person name="Chen R."/>
            <person name="Durbin K.J."/>
            <person name="Egan A."/>
            <person name="Ren Y."/>
            <person name="Song X.-Z."/>
            <person name="Li B."/>
            <person name="Liu Y."/>
            <person name="Qin X."/>
            <person name="Cawley S."/>
            <person name="Cooney A.J."/>
            <person name="D'Souza L.M."/>
            <person name="Martin K."/>
            <person name="Wu J.Q."/>
            <person name="Gonzalez-Garay M.L."/>
            <person name="Jackson A.R."/>
            <person name="Kalafus K.J."/>
            <person name="McLeod M.P."/>
            <person name="Milosavljevic A."/>
            <person name="Virk D."/>
            <person name="Volkov A."/>
            <person name="Wheeler D.A."/>
            <person name="Zhang Z."/>
            <person name="Bailey J.A."/>
            <person name="Eichler E.E."/>
            <person name="Tuzun E."/>
            <person name="Birney E."/>
            <person name="Mongin E."/>
            <person name="Ureta-Vidal A."/>
            <person name="Woodwark C."/>
            <person name="Zdobnov E."/>
            <person name="Bork P."/>
            <person name="Suyama M."/>
            <person name="Torrents D."/>
            <person name="Alexandersson M."/>
            <person name="Trask B.J."/>
            <person name="Young J.M."/>
            <person name="Huang H."/>
            <person name="Wang H."/>
            <person name="Xing H."/>
            <person name="Daniels S."/>
            <person name="Gietzen D."/>
            <person name="Schmidt J."/>
            <person name="Stevens K."/>
            <person name="Vitt U."/>
            <person name="Wingrove J."/>
            <person name="Camara F."/>
            <person name="Mar Alba M."/>
            <person name="Abril J.F."/>
            <person name="Guigo R."/>
            <person name="Smit A."/>
            <person name="Dubchak I."/>
            <person name="Rubin E.M."/>
            <person name="Couronne O."/>
            <person name="Poliakov A."/>
            <person name="Huebner N."/>
            <person name="Ganten D."/>
            <person name="Goesele C."/>
            <person name="Hummel O."/>
            <person name="Kreitler T."/>
            <person name="Lee Y.-A."/>
            <person name="Monti J."/>
            <person name="Schulz H."/>
            <person name="Zimdahl H."/>
            <person name="Himmelbauer H."/>
            <person name="Lehrach H."/>
            <person name="Jacob H.J."/>
            <person name="Bromberg S."/>
            <person name="Gullings-Handley J."/>
            <person name="Jensen-Seaman M.I."/>
            <person name="Kwitek A.E."/>
            <person name="Lazar J."/>
            <person name="Pasko D."/>
            <person name="Tonellato P.J."/>
            <person name="Twigger S."/>
            <person name="Ponting C.P."/>
            <person name="Duarte J.M."/>
            <person name="Rice S."/>
            <person name="Goodstadt L."/>
            <person name="Beatson S.A."/>
            <person name="Emes R.D."/>
            <person name="Winter E.E."/>
            <person name="Webber C."/>
            <person name="Brandt P."/>
            <person name="Nyakatura G."/>
            <person name="Adetobi M."/>
            <person name="Chiaromonte F."/>
            <person name="Elnitski L."/>
            <person name="Eswara P."/>
            <person name="Hardison R.C."/>
            <person name="Hou M."/>
            <person name="Kolbe D."/>
            <person name="Makova K."/>
            <person name="Miller W."/>
            <person name="Nekrutenko A."/>
            <person name="Riemer C."/>
            <person name="Schwartz S."/>
            <person name="Taylor J."/>
            <person name="Yang S."/>
            <person name="Zhang Y."/>
            <person name="Lindpaintner K."/>
            <person name="Andrews T.D."/>
            <person name="Caccamo M."/>
            <person name="Clamp M."/>
            <person name="Clarke L."/>
            <person name="Curwen V."/>
            <person name="Durbin R.M."/>
            <person name="Eyras E."/>
            <person name="Searle S.M."/>
            <person name="Cooper G.M."/>
            <person name="Batzoglou S."/>
            <person name="Brudno M."/>
            <person name="Sidow A."/>
            <person name="Stone E.A."/>
            <person name="Payseur B.A."/>
            <person name="Bourque G."/>
            <person name="Lopez-Otin C."/>
            <person name="Puente X.S."/>
            <person name="Chakrabarti K."/>
            <person name="Chatterji S."/>
            <person name="Dewey C."/>
            <person name="Pachter L."/>
            <person name="Bray N."/>
            <person name="Yap V.B."/>
            <person name="Caspi A."/>
            <person name="Tesler G."/>
            <person name="Pevzner P.A."/>
            <person name="Haussler D."/>
            <person name="Roskin K.M."/>
            <person name="Baertsch R."/>
            <person name="Clawson H."/>
            <person name="Furey T.S."/>
            <person name="Hinrichs A.S."/>
            <person name="Karolchik D."/>
            <person name="Kent W.J."/>
            <person name="Rosenbloom K.R."/>
            <person name="Trumbower H."/>
            <person name="Weirauch M."/>
            <person name="Cooper D.N."/>
            <person name="Stenson P.D."/>
            <person name="Ma B."/>
            <person name="Brent M."/>
            <person name="Arumugam M."/>
            <person name="Shteynberg D."/>
            <person name="Copley R.R."/>
            <person name="Taylor M.S."/>
            <person name="Riethman H."/>
            <person name="Mudunuri U."/>
            <person name="Peterson J."/>
            <person name="Guyer M."/>
            <person name="Felsenfeld A."/>
            <person name="Old S."/>
            <person name="Mockrin S."/>
            <person name="Collins F.S."/>
        </authorList>
    </citation>
    <scope>NUCLEOTIDE SEQUENCE [LARGE SCALE GENOMIC DNA]</scope>
    <source>
        <strain>Brown Norway</strain>
    </source>
</reference>
<reference key="2">
    <citation type="submission" date="2005-07" db="EMBL/GenBank/DDBJ databases">
        <authorList>
            <person name="Mural R.J."/>
            <person name="Adams M.D."/>
            <person name="Myers E.W."/>
            <person name="Smith H.O."/>
            <person name="Venter J.C."/>
        </authorList>
    </citation>
    <scope>NUCLEOTIDE SEQUENCE [LARGE SCALE GENOMIC DNA]</scope>
</reference>
<reference key="3">
    <citation type="journal article" date="2011" name="EMBO J.">
        <title>SCF(FBXL15) regulates BMP signalling by directing the degradation of HECT-type ubiquitin ligase Smurf1.</title>
        <authorList>
            <person name="Cui Y."/>
            <person name="He S."/>
            <person name="Xing C."/>
            <person name="Lu K."/>
            <person name="Wang J."/>
            <person name="Xing G."/>
            <person name="Meng A."/>
            <person name="Jia S."/>
            <person name="He F."/>
            <person name="Zhang L."/>
        </authorList>
    </citation>
    <scope>FUNCTION</scope>
</reference>
<gene>
    <name type="primary">Fbxl15</name>
</gene>
<dbReference type="EMBL" id="AC096363">
    <property type="status" value="NOT_ANNOTATED_CDS"/>
    <property type="molecule type" value="Genomic_DNA"/>
</dbReference>
<dbReference type="EMBL" id="CH473986">
    <property type="protein sequence ID" value="EDL94345.1"/>
    <property type="molecule type" value="Genomic_DNA"/>
</dbReference>
<dbReference type="RefSeq" id="NP_001101073.1">
    <property type="nucleotide sequence ID" value="NM_001107603.1"/>
</dbReference>
<dbReference type="SMR" id="D4ABB4"/>
<dbReference type="FunCoup" id="D4ABB4">
    <property type="interactions" value="323"/>
</dbReference>
<dbReference type="STRING" id="10116.ENSRNOP00000026471"/>
<dbReference type="iPTMnet" id="D4ABB4"/>
<dbReference type="PhosphoSitePlus" id="D4ABB4"/>
<dbReference type="PaxDb" id="10116-ENSRNOP00000026471"/>
<dbReference type="PeptideAtlas" id="D4ABB4"/>
<dbReference type="Ensembl" id="ENSRNOT00000026471.6">
    <property type="protein sequence ID" value="ENSRNOP00000026471.4"/>
    <property type="gene ID" value="ENSRNOG00000019509.6"/>
</dbReference>
<dbReference type="GeneID" id="309453"/>
<dbReference type="KEGG" id="rno:309453"/>
<dbReference type="AGR" id="RGD:1306444"/>
<dbReference type="CTD" id="79176"/>
<dbReference type="RGD" id="1306444">
    <property type="gene designation" value="Fbxl15"/>
</dbReference>
<dbReference type="eggNOG" id="KOG1947">
    <property type="taxonomic scope" value="Eukaryota"/>
</dbReference>
<dbReference type="GeneTree" id="ENSGT00940000160250"/>
<dbReference type="HOGENOM" id="CLU_065717_2_0_1"/>
<dbReference type="InParanoid" id="D4ABB4"/>
<dbReference type="OMA" id="CHRITER"/>
<dbReference type="OrthoDB" id="27842at2759"/>
<dbReference type="PhylomeDB" id="D4ABB4"/>
<dbReference type="TreeFam" id="TF326769"/>
<dbReference type="Reactome" id="R-RNO-8951664">
    <property type="pathway name" value="Neddylation"/>
</dbReference>
<dbReference type="Reactome" id="R-RNO-983168">
    <property type="pathway name" value="Antigen processing: Ubiquitination &amp; Proteasome degradation"/>
</dbReference>
<dbReference type="UniPathway" id="UPA00143"/>
<dbReference type="PRO" id="PR:D4ABB4"/>
<dbReference type="Proteomes" id="UP000002494">
    <property type="component" value="Chromosome 1"/>
</dbReference>
<dbReference type="Proteomes" id="UP000234681">
    <property type="component" value="Chromosome 1"/>
</dbReference>
<dbReference type="Bgee" id="ENSRNOG00000019509">
    <property type="expression patterns" value="Expressed in frontal cortex and 20 other cell types or tissues"/>
</dbReference>
<dbReference type="GO" id="GO:0005737">
    <property type="term" value="C:cytoplasm"/>
    <property type="evidence" value="ECO:0000250"/>
    <property type="project" value="UniProtKB"/>
</dbReference>
<dbReference type="GO" id="GO:0019005">
    <property type="term" value="C:SCF ubiquitin ligase complex"/>
    <property type="evidence" value="ECO:0000250"/>
    <property type="project" value="UniProtKB"/>
</dbReference>
<dbReference type="GO" id="GO:0030282">
    <property type="term" value="P:bone mineralization"/>
    <property type="evidence" value="ECO:0000315"/>
    <property type="project" value="UniProtKB"/>
</dbReference>
<dbReference type="GO" id="GO:0009953">
    <property type="term" value="P:dorsal/ventral pattern formation"/>
    <property type="evidence" value="ECO:0000250"/>
    <property type="project" value="UniProtKB"/>
</dbReference>
<dbReference type="GO" id="GO:0000086">
    <property type="term" value="P:G2/M transition of mitotic cell cycle"/>
    <property type="evidence" value="ECO:0000250"/>
    <property type="project" value="UniProtKB"/>
</dbReference>
<dbReference type="GO" id="GO:0030513">
    <property type="term" value="P:positive regulation of BMP signaling pathway"/>
    <property type="evidence" value="ECO:0000250"/>
    <property type="project" value="UniProtKB"/>
</dbReference>
<dbReference type="GO" id="GO:0016567">
    <property type="term" value="P:protein ubiquitination"/>
    <property type="evidence" value="ECO:0000250"/>
    <property type="project" value="UniProtKB"/>
</dbReference>
<dbReference type="GO" id="GO:0031146">
    <property type="term" value="P:SCF-dependent proteasomal ubiquitin-dependent protein catabolic process"/>
    <property type="evidence" value="ECO:0000250"/>
    <property type="project" value="UniProtKB"/>
</dbReference>
<dbReference type="CDD" id="cd22126">
    <property type="entry name" value="F-box_FBXL15"/>
    <property type="match status" value="1"/>
</dbReference>
<dbReference type="FunFam" id="3.80.10.10:FF:000113">
    <property type="entry name" value="F-box/LRR-repeat protein 15 isoform X1"/>
    <property type="match status" value="1"/>
</dbReference>
<dbReference type="Gene3D" id="3.80.10.10">
    <property type="entry name" value="Ribonuclease Inhibitor"/>
    <property type="match status" value="1"/>
</dbReference>
<dbReference type="InterPro" id="IPR036047">
    <property type="entry name" value="F-box-like_dom_sf"/>
</dbReference>
<dbReference type="InterPro" id="IPR001810">
    <property type="entry name" value="F-box_dom"/>
</dbReference>
<dbReference type="InterPro" id="IPR001611">
    <property type="entry name" value="Leu-rich_rpt"/>
</dbReference>
<dbReference type="InterPro" id="IPR006553">
    <property type="entry name" value="Leu-rich_rpt_Cys-con_subtyp"/>
</dbReference>
<dbReference type="InterPro" id="IPR032675">
    <property type="entry name" value="LRR_dom_sf"/>
</dbReference>
<dbReference type="InterPro" id="IPR055411">
    <property type="entry name" value="LRR_FXL15/At3g58940/PEG3-like"/>
</dbReference>
<dbReference type="PANTHER" id="PTHR13318:SF179">
    <property type="entry name" value="F-BOX_LRR-REPEAT PROTEIN 15"/>
    <property type="match status" value="1"/>
</dbReference>
<dbReference type="PANTHER" id="PTHR13318">
    <property type="entry name" value="PARTNER OF PAIRED, ISOFORM B-RELATED"/>
    <property type="match status" value="1"/>
</dbReference>
<dbReference type="Pfam" id="PF00646">
    <property type="entry name" value="F-box"/>
    <property type="match status" value="1"/>
</dbReference>
<dbReference type="Pfam" id="PF13516">
    <property type="entry name" value="LRR_6"/>
    <property type="match status" value="1"/>
</dbReference>
<dbReference type="Pfam" id="PF24758">
    <property type="entry name" value="LRR_At5g56370"/>
    <property type="match status" value="1"/>
</dbReference>
<dbReference type="SMART" id="SM00367">
    <property type="entry name" value="LRR_CC"/>
    <property type="match status" value="6"/>
</dbReference>
<dbReference type="SUPFAM" id="SSF81383">
    <property type="entry name" value="F-box domain"/>
    <property type="match status" value="1"/>
</dbReference>
<dbReference type="SUPFAM" id="SSF52047">
    <property type="entry name" value="RNI-like"/>
    <property type="match status" value="1"/>
</dbReference>
<organism>
    <name type="scientific">Rattus norvegicus</name>
    <name type="common">Rat</name>
    <dbReference type="NCBI Taxonomy" id="10116"/>
    <lineage>
        <taxon>Eukaryota</taxon>
        <taxon>Metazoa</taxon>
        <taxon>Chordata</taxon>
        <taxon>Craniata</taxon>
        <taxon>Vertebrata</taxon>
        <taxon>Euteleostomi</taxon>
        <taxon>Mammalia</taxon>
        <taxon>Eutheria</taxon>
        <taxon>Euarchontoglires</taxon>
        <taxon>Glires</taxon>
        <taxon>Rodentia</taxon>
        <taxon>Myomorpha</taxon>
        <taxon>Muroidea</taxon>
        <taxon>Muridae</taxon>
        <taxon>Murinae</taxon>
        <taxon>Rattus</taxon>
    </lineage>
</organism>
<evidence type="ECO:0000250" key="1"/>
<evidence type="ECO:0000250" key="2">
    <source>
        <dbReference type="UniProtKB" id="Q9H469"/>
    </source>
</evidence>
<evidence type="ECO:0000269" key="3">
    <source>
    </source>
</evidence>
<evidence type="ECO:0000305" key="4"/>